<feature type="chain" id="PRO_0000236689" description="Tyrosine--tRNA ligase">
    <location>
        <begin position="1"/>
        <end position="398"/>
    </location>
</feature>
<feature type="domain" description="S4 RNA-binding" evidence="1">
    <location>
        <begin position="334"/>
        <end position="398"/>
    </location>
</feature>
<feature type="short sequence motif" description="'HIGH' region">
    <location>
        <begin position="48"/>
        <end position="57"/>
    </location>
</feature>
<feature type="short sequence motif" description="'KMSKS' region">
    <location>
        <begin position="235"/>
        <end position="239"/>
    </location>
</feature>
<feature type="binding site" evidence="1">
    <location>
        <position position="238"/>
    </location>
    <ligand>
        <name>ATP</name>
        <dbReference type="ChEBI" id="CHEBI:30616"/>
    </ligand>
</feature>
<accession>Q8YSU9</accession>
<protein>
    <recommendedName>
        <fullName evidence="1">Tyrosine--tRNA ligase</fullName>
        <ecNumber evidence="1">6.1.1.1</ecNumber>
    </recommendedName>
    <alternativeName>
        <fullName evidence="1">Tyrosyl-tRNA synthetase</fullName>
        <shortName evidence="1">TyrRS</shortName>
    </alternativeName>
</protein>
<dbReference type="EC" id="6.1.1.1" evidence="1"/>
<dbReference type="EMBL" id="BA000019">
    <property type="protein sequence ID" value="BAB74681.1"/>
    <property type="molecule type" value="Genomic_DNA"/>
</dbReference>
<dbReference type="PIR" id="AG2178">
    <property type="entry name" value="AG2178"/>
</dbReference>
<dbReference type="RefSeq" id="WP_010997133.1">
    <property type="nucleotide sequence ID" value="NZ_RSCN01000003.1"/>
</dbReference>
<dbReference type="SMR" id="Q8YSU9"/>
<dbReference type="STRING" id="103690.gene:10495018"/>
<dbReference type="KEGG" id="ana:alr2982"/>
<dbReference type="eggNOG" id="COG0162">
    <property type="taxonomic scope" value="Bacteria"/>
</dbReference>
<dbReference type="OrthoDB" id="9804243at2"/>
<dbReference type="Proteomes" id="UP000002483">
    <property type="component" value="Chromosome"/>
</dbReference>
<dbReference type="GO" id="GO:0005829">
    <property type="term" value="C:cytosol"/>
    <property type="evidence" value="ECO:0007669"/>
    <property type="project" value="TreeGrafter"/>
</dbReference>
<dbReference type="GO" id="GO:0005524">
    <property type="term" value="F:ATP binding"/>
    <property type="evidence" value="ECO:0007669"/>
    <property type="project" value="UniProtKB-UniRule"/>
</dbReference>
<dbReference type="GO" id="GO:0003723">
    <property type="term" value="F:RNA binding"/>
    <property type="evidence" value="ECO:0007669"/>
    <property type="project" value="UniProtKB-KW"/>
</dbReference>
<dbReference type="GO" id="GO:0004831">
    <property type="term" value="F:tyrosine-tRNA ligase activity"/>
    <property type="evidence" value="ECO:0007669"/>
    <property type="project" value="UniProtKB-UniRule"/>
</dbReference>
<dbReference type="GO" id="GO:0006437">
    <property type="term" value="P:tyrosyl-tRNA aminoacylation"/>
    <property type="evidence" value="ECO:0007669"/>
    <property type="project" value="UniProtKB-UniRule"/>
</dbReference>
<dbReference type="CDD" id="cd00805">
    <property type="entry name" value="TyrRS_core"/>
    <property type="match status" value="1"/>
</dbReference>
<dbReference type="FunFam" id="3.10.290.10:FF:000022">
    <property type="entry name" value="Tyrosine--tRNA ligase"/>
    <property type="match status" value="1"/>
</dbReference>
<dbReference type="Gene3D" id="3.40.50.620">
    <property type="entry name" value="HUPs"/>
    <property type="match status" value="1"/>
</dbReference>
<dbReference type="Gene3D" id="3.10.290.10">
    <property type="entry name" value="RNA-binding S4 domain"/>
    <property type="match status" value="1"/>
</dbReference>
<dbReference type="Gene3D" id="1.10.240.10">
    <property type="entry name" value="Tyrosyl-Transfer RNA Synthetase"/>
    <property type="match status" value="1"/>
</dbReference>
<dbReference type="HAMAP" id="MF_02007">
    <property type="entry name" value="Tyr_tRNA_synth_type2"/>
    <property type="match status" value="1"/>
</dbReference>
<dbReference type="InterPro" id="IPR001412">
    <property type="entry name" value="aa-tRNA-synth_I_CS"/>
</dbReference>
<dbReference type="InterPro" id="IPR002305">
    <property type="entry name" value="aa-tRNA-synth_Ic"/>
</dbReference>
<dbReference type="InterPro" id="IPR014729">
    <property type="entry name" value="Rossmann-like_a/b/a_fold"/>
</dbReference>
<dbReference type="InterPro" id="IPR036986">
    <property type="entry name" value="S4_RNA-bd_sf"/>
</dbReference>
<dbReference type="InterPro" id="IPR054608">
    <property type="entry name" value="SYY-like_C"/>
</dbReference>
<dbReference type="InterPro" id="IPR002307">
    <property type="entry name" value="Tyr-tRNA-ligase"/>
</dbReference>
<dbReference type="InterPro" id="IPR024088">
    <property type="entry name" value="Tyr-tRNA-ligase_bac-type"/>
</dbReference>
<dbReference type="InterPro" id="IPR024108">
    <property type="entry name" value="Tyr-tRNA-ligase_bac_2"/>
</dbReference>
<dbReference type="NCBIfam" id="TIGR00234">
    <property type="entry name" value="tyrS"/>
    <property type="match status" value="1"/>
</dbReference>
<dbReference type="PANTHER" id="PTHR11766:SF1">
    <property type="entry name" value="TYROSINE--TRNA LIGASE"/>
    <property type="match status" value="1"/>
</dbReference>
<dbReference type="PANTHER" id="PTHR11766">
    <property type="entry name" value="TYROSYL-TRNA SYNTHETASE"/>
    <property type="match status" value="1"/>
</dbReference>
<dbReference type="Pfam" id="PF22421">
    <property type="entry name" value="SYY_C-terminal"/>
    <property type="match status" value="1"/>
</dbReference>
<dbReference type="Pfam" id="PF00579">
    <property type="entry name" value="tRNA-synt_1b"/>
    <property type="match status" value="1"/>
</dbReference>
<dbReference type="PRINTS" id="PR01040">
    <property type="entry name" value="TRNASYNTHTYR"/>
</dbReference>
<dbReference type="SUPFAM" id="SSF55174">
    <property type="entry name" value="Alpha-L RNA-binding motif"/>
    <property type="match status" value="1"/>
</dbReference>
<dbReference type="SUPFAM" id="SSF52374">
    <property type="entry name" value="Nucleotidylyl transferase"/>
    <property type="match status" value="1"/>
</dbReference>
<dbReference type="PROSITE" id="PS00178">
    <property type="entry name" value="AA_TRNA_LIGASE_I"/>
    <property type="match status" value="1"/>
</dbReference>
<dbReference type="PROSITE" id="PS50889">
    <property type="entry name" value="S4"/>
    <property type="match status" value="1"/>
</dbReference>
<reference key="1">
    <citation type="journal article" date="2001" name="DNA Res.">
        <title>Complete genomic sequence of the filamentous nitrogen-fixing cyanobacterium Anabaena sp. strain PCC 7120.</title>
        <authorList>
            <person name="Kaneko T."/>
            <person name="Nakamura Y."/>
            <person name="Wolk C.P."/>
            <person name="Kuritz T."/>
            <person name="Sasamoto S."/>
            <person name="Watanabe A."/>
            <person name="Iriguchi M."/>
            <person name="Ishikawa A."/>
            <person name="Kawashima K."/>
            <person name="Kimura T."/>
            <person name="Kishida Y."/>
            <person name="Kohara M."/>
            <person name="Matsumoto M."/>
            <person name="Matsuno A."/>
            <person name="Muraki A."/>
            <person name="Nakazaki N."/>
            <person name="Shimpo S."/>
            <person name="Sugimoto M."/>
            <person name="Takazawa M."/>
            <person name="Yamada M."/>
            <person name="Yasuda M."/>
            <person name="Tabata S."/>
        </authorList>
    </citation>
    <scope>NUCLEOTIDE SEQUENCE [LARGE SCALE GENOMIC DNA]</scope>
    <source>
        <strain>PCC 7120 / SAG 25.82 / UTEX 2576</strain>
    </source>
</reference>
<gene>
    <name evidence="1" type="primary">tyrS</name>
    <name type="ordered locus">alr2982</name>
</gene>
<sequence>MAENFSWLHRGIAEVFPQPTDAESDIESLEKRLATTDRPLRVKYGIDPTGADIHLGHSIPMRKLRGFQDAGHTAVLIIGDFTARIGDPTGKSEMRRQLTEEDVKQNAQTYLDQVRPILDFDTPGRLEVRYNSEWLSRLDLGKITELLATMTVGQMLAKEGFADRYKKENPIFLHEFLYPLMQGYDSVAIEADVELGGTDQKFNIAVGRDLQRHFGQKPQFGVLLPILIGTDGVQKMSKSLGNYVSLSEHPGQKYQKLQGVPDVLLKDYFELLTNLPIDALPENPRDRQMLLAWEIVKQYHGEQAANEAKEAAQSGGKEGAVPEFSLSNVSQFPVKLAYLLGATGLCKSTGEGKRKIQEGGVRLDGDRISDADTTFQQPDELQGRVLQVGKNKFMRLVP</sequence>
<organism>
    <name type="scientific">Nostoc sp. (strain PCC 7120 / SAG 25.82 / UTEX 2576)</name>
    <dbReference type="NCBI Taxonomy" id="103690"/>
    <lineage>
        <taxon>Bacteria</taxon>
        <taxon>Bacillati</taxon>
        <taxon>Cyanobacteriota</taxon>
        <taxon>Cyanophyceae</taxon>
        <taxon>Nostocales</taxon>
        <taxon>Nostocaceae</taxon>
        <taxon>Nostoc</taxon>
    </lineage>
</organism>
<keyword id="KW-0030">Aminoacyl-tRNA synthetase</keyword>
<keyword id="KW-0067">ATP-binding</keyword>
<keyword id="KW-0963">Cytoplasm</keyword>
<keyword id="KW-0436">Ligase</keyword>
<keyword id="KW-0547">Nucleotide-binding</keyword>
<keyword id="KW-0648">Protein biosynthesis</keyword>
<keyword id="KW-1185">Reference proteome</keyword>
<keyword id="KW-0694">RNA-binding</keyword>
<evidence type="ECO:0000255" key="1">
    <source>
        <dbReference type="HAMAP-Rule" id="MF_02007"/>
    </source>
</evidence>
<proteinExistence type="inferred from homology"/>
<comment type="function">
    <text evidence="1">Catalyzes the attachment of tyrosine to tRNA(Tyr) in a two-step reaction: tyrosine is first activated by ATP to form Tyr-AMP and then transferred to the acceptor end of tRNA(Tyr).</text>
</comment>
<comment type="catalytic activity">
    <reaction evidence="1">
        <text>tRNA(Tyr) + L-tyrosine + ATP = L-tyrosyl-tRNA(Tyr) + AMP + diphosphate + H(+)</text>
        <dbReference type="Rhea" id="RHEA:10220"/>
        <dbReference type="Rhea" id="RHEA-COMP:9706"/>
        <dbReference type="Rhea" id="RHEA-COMP:9707"/>
        <dbReference type="ChEBI" id="CHEBI:15378"/>
        <dbReference type="ChEBI" id="CHEBI:30616"/>
        <dbReference type="ChEBI" id="CHEBI:33019"/>
        <dbReference type="ChEBI" id="CHEBI:58315"/>
        <dbReference type="ChEBI" id="CHEBI:78442"/>
        <dbReference type="ChEBI" id="CHEBI:78536"/>
        <dbReference type="ChEBI" id="CHEBI:456215"/>
        <dbReference type="EC" id="6.1.1.1"/>
    </reaction>
</comment>
<comment type="subunit">
    <text evidence="1">Homodimer.</text>
</comment>
<comment type="subcellular location">
    <subcellularLocation>
        <location evidence="1">Cytoplasm</location>
    </subcellularLocation>
</comment>
<comment type="similarity">
    <text evidence="1">Belongs to the class-I aminoacyl-tRNA synthetase family. TyrS type 2 subfamily.</text>
</comment>
<name>SYY_NOSS1</name>